<proteinExistence type="inferred from homology"/>
<comment type="function">
    <text evidence="1">Responsible for the release of ribosomes from messenger RNA at the termination of protein biosynthesis. May increase the efficiency of translation by recycling ribosomes from one round of translation to another.</text>
</comment>
<comment type="subcellular location">
    <subcellularLocation>
        <location evidence="1">Cytoplasm</location>
    </subcellularLocation>
</comment>
<comment type="similarity">
    <text evidence="1">Belongs to the RRF family.</text>
</comment>
<feature type="chain" id="PRO_1000003308" description="Ribosome-recycling factor">
    <location>
        <begin position="1"/>
        <end position="185"/>
    </location>
</feature>
<sequence>MLNEIQQNSQNKMNKSINSLKNAFSKIRASRAHPSLLEQIHINYYGSMVPLSQVANISTEDSRTLKASPWEKDMVSVIEKAIMTSDLGLNPQTIGQVIRIHLPPLTQERRGELVKIIKDEAEKAKIAIRNIRRDANSDFKELLKEKEISKDEARKAEYDIQKITDEYIKKIEINLNKKEDSLLEI</sequence>
<dbReference type="EMBL" id="AP009247">
    <property type="protein sequence ID" value="BAF61376.1"/>
    <property type="molecule type" value="Genomic_DNA"/>
</dbReference>
<dbReference type="RefSeq" id="WP_011929646.1">
    <property type="nucleotide sequence ID" value="NC_009465.1"/>
</dbReference>
<dbReference type="SMR" id="A5CXD6"/>
<dbReference type="STRING" id="412965.COSY_0246"/>
<dbReference type="KEGG" id="vok:COSY_0246"/>
<dbReference type="eggNOG" id="COG0233">
    <property type="taxonomic scope" value="Bacteria"/>
</dbReference>
<dbReference type="HOGENOM" id="CLU_073981_2_0_6"/>
<dbReference type="OrthoDB" id="9804006at2"/>
<dbReference type="Proteomes" id="UP000000247">
    <property type="component" value="Chromosome"/>
</dbReference>
<dbReference type="GO" id="GO:0005829">
    <property type="term" value="C:cytosol"/>
    <property type="evidence" value="ECO:0007669"/>
    <property type="project" value="GOC"/>
</dbReference>
<dbReference type="GO" id="GO:0043023">
    <property type="term" value="F:ribosomal large subunit binding"/>
    <property type="evidence" value="ECO:0007669"/>
    <property type="project" value="TreeGrafter"/>
</dbReference>
<dbReference type="GO" id="GO:0002184">
    <property type="term" value="P:cytoplasmic translational termination"/>
    <property type="evidence" value="ECO:0007669"/>
    <property type="project" value="TreeGrafter"/>
</dbReference>
<dbReference type="CDD" id="cd00520">
    <property type="entry name" value="RRF"/>
    <property type="match status" value="1"/>
</dbReference>
<dbReference type="FunFam" id="1.10.132.20:FF:000001">
    <property type="entry name" value="Ribosome-recycling factor"/>
    <property type="match status" value="1"/>
</dbReference>
<dbReference type="FunFam" id="3.30.1360.40:FF:000001">
    <property type="entry name" value="Ribosome-recycling factor"/>
    <property type="match status" value="1"/>
</dbReference>
<dbReference type="Gene3D" id="3.30.1360.40">
    <property type="match status" value="1"/>
</dbReference>
<dbReference type="Gene3D" id="1.10.132.20">
    <property type="entry name" value="Ribosome-recycling factor"/>
    <property type="match status" value="1"/>
</dbReference>
<dbReference type="HAMAP" id="MF_00040">
    <property type="entry name" value="RRF"/>
    <property type="match status" value="1"/>
</dbReference>
<dbReference type="InterPro" id="IPR002661">
    <property type="entry name" value="Ribosome_recyc_fac"/>
</dbReference>
<dbReference type="InterPro" id="IPR023584">
    <property type="entry name" value="Ribosome_recyc_fac_dom"/>
</dbReference>
<dbReference type="InterPro" id="IPR036191">
    <property type="entry name" value="RRF_sf"/>
</dbReference>
<dbReference type="NCBIfam" id="TIGR00496">
    <property type="entry name" value="frr"/>
    <property type="match status" value="1"/>
</dbReference>
<dbReference type="PANTHER" id="PTHR20982:SF3">
    <property type="entry name" value="MITOCHONDRIAL RIBOSOME RECYCLING FACTOR PSEUDO 1"/>
    <property type="match status" value="1"/>
</dbReference>
<dbReference type="PANTHER" id="PTHR20982">
    <property type="entry name" value="RIBOSOME RECYCLING FACTOR"/>
    <property type="match status" value="1"/>
</dbReference>
<dbReference type="Pfam" id="PF01765">
    <property type="entry name" value="RRF"/>
    <property type="match status" value="1"/>
</dbReference>
<dbReference type="SUPFAM" id="SSF55194">
    <property type="entry name" value="Ribosome recycling factor, RRF"/>
    <property type="match status" value="1"/>
</dbReference>
<protein>
    <recommendedName>
        <fullName evidence="1">Ribosome-recycling factor</fullName>
        <shortName evidence="1">RRF</shortName>
    </recommendedName>
    <alternativeName>
        <fullName evidence="1">Ribosome-releasing factor</fullName>
    </alternativeName>
</protein>
<name>RRF_VESOH</name>
<reference key="1">
    <citation type="journal article" date="2007" name="Curr. Biol.">
        <title>Reduced genome of the thioautotrophic intracellular symbiont in a deep-sea clam, Calyptogena okutanii.</title>
        <authorList>
            <person name="Kuwahara H."/>
            <person name="Yoshida T."/>
            <person name="Takaki Y."/>
            <person name="Shimamura S."/>
            <person name="Nishi S."/>
            <person name="Harada M."/>
            <person name="Matsuyama K."/>
            <person name="Takishita K."/>
            <person name="Kawato M."/>
            <person name="Uematsu K."/>
            <person name="Fujiwara Y."/>
            <person name="Sato T."/>
            <person name="Kato C."/>
            <person name="Kitagawa M."/>
            <person name="Kato I."/>
            <person name="Maruyama T."/>
        </authorList>
    </citation>
    <scope>NUCLEOTIDE SEQUENCE [LARGE SCALE GENOMIC DNA]</scope>
    <source>
        <strain>HA</strain>
    </source>
</reference>
<organism>
    <name type="scientific">Vesicomyosocius okutanii subsp. Calyptogena okutanii (strain HA)</name>
    <dbReference type="NCBI Taxonomy" id="412965"/>
    <lineage>
        <taxon>Bacteria</taxon>
        <taxon>Pseudomonadati</taxon>
        <taxon>Pseudomonadota</taxon>
        <taxon>Gammaproteobacteria</taxon>
        <taxon>Candidatus Pseudothioglobaceae</taxon>
        <taxon>Candidatus Vesicomyosocius</taxon>
    </lineage>
</organism>
<evidence type="ECO:0000255" key="1">
    <source>
        <dbReference type="HAMAP-Rule" id="MF_00040"/>
    </source>
</evidence>
<gene>
    <name evidence="1" type="primary">frr</name>
    <name type="ordered locus">COSY_0246</name>
</gene>
<accession>A5CXD6</accession>
<keyword id="KW-0963">Cytoplasm</keyword>
<keyword id="KW-0648">Protein biosynthesis</keyword>
<keyword id="KW-1185">Reference proteome</keyword>